<protein>
    <recommendedName>
        <fullName evidence="1">Phosphomethylpyrimidine synthase</fullName>
        <ecNumber evidence="1">4.1.99.17</ecNumber>
    </recommendedName>
    <alternativeName>
        <fullName evidence="1">Hydroxymethylpyrimidine phosphate synthase</fullName>
        <shortName evidence="1">HMP-P synthase</shortName>
        <shortName evidence="1">HMP-phosphate synthase</shortName>
        <shortName evidence="1">HMPP synthase</shortName>
    </alternativeName>
    <alternativeName>
        <fullName evidence="1">Thiamine biosynthesis protein ThiC</fullName>
    </alternativeName>
</protein>
<keyword id="KW-0004">4Fe-4S</keyword>
<keyword id="KW-0408">Iron</keyword>
<keyword id="KW-0411">Iron-sulfur</keyword>
<keyword id="KW-0456">Lyase</keyword>
<keyword id="KW-0479">Metal-binding</keyword>
<keyword id="KW-0949">S-adenosyl-L-methionine</keyword>
<keyword id="KW-0784">Thiamine biosynthesis</keyword>
<keyword id="KW-0862">Zinc</keyword>
<reference key="1">
    <citation type="submission" date="2006-12" db="EMBL/GenBank/DDBJ databases">
        <title>Complete sequence of Acidovorax avenae subsp. citrulli AAC00-1.</title>
        <authorList>
            <person name="Copeland A."/>
            <person name="Lucas S."/>
            <person name="Lapidus A."/>
            <person name="Barry K."/>
            <person name="Detter J.C."/>
            <person name="Glavina del Rio T."/>
            <person name="Dalin E."/>
            <person name="Tice H."/>
            <person name="Pitluck S."/>
            <person name="Kiss H."/>
            <person name="Brettin T."/>
            <person name="Bruce D."/>
            <person name="Han C."/>
            <person name="Tapia R."/>
            <person name="Gilna P."/>
            <person name="Schmutz J."/>
            <person name="Larimer F."/>
            <person name="Land M."/>
            <person name="Hauser L."/>
            <person name="Kyrpides N."/>
            <person name="Kim E."/>
            <person name="Stahl D."/>
            <person name="Richardson P."/>
        </authorList>
    </citation>
    <scope>NUCLEOTIDE SEQUENCE [LARGE SCALE GENOMIC DNA]</scope>
    <source>
        <strain>AAC00-1</strain>
    </source>
</reference>
<name>THIC_PARC0</name>
<dbReference type="EC" id="4.1.99.17" evidence="1"/>
<dbReference type="EMBL" id="CP000512">
    <property type="protein sequence ID" value="ABM31427.1"/>
    <property type="molecule type" value="Genomic_DNA"/>
</dbReference>
<dbReference type="RefSeq" id="WP_011793987.1">
    <property type="nucleotide sequence ID" value="NC_008752.1"/>
</dbReference>
<dbReference type="SMR" id="A1TKD9"/>
<dbReference type="STRING" id="397945.Aave_0829"/>
<dbReference type="KEGG" id="aav:Aave_0829"/>
<dbReference type="eggNOG" id="COG0422">
    <property type="taxonomic scope" value="Bacteria"/>
</dbReference>
<dbReference type="HOGENOM" id="CLU_013181_2_1_4"/>
<dbReference type="OrthoDB" id="9805897at2"/>
<dbReference type="UniPathway" id="UPA00060"/>
<dbReference type="Proteomes" id="UP000002596">
    <property type="component" value="Chromosome"/>
</dbReference>
<dbReference type="GO" id="GO:0005829">
    <property type="term" value="C:cytosol"/>
    <property type="evidence" value="ECO:0007669"/>
    <property type="project" value="TreeGrafter"/>
</dbReference>
<dbReference type="GO" id="GO:0051539">
    <property type="term" value="F:4 iron, 4 sulfur cluster binding"/>
    <property type="evidence" value="ECO:0007669"/>
    <property type="project" value="UniProtKB-KW"/>
</dbReference>
<dbReference type="GO" id="GO:0016830">
    <property type="term" value="F:carbon-carbon lyase activity"/>
    <property type="evidence" value="ECO:0007669"/>
    <property type="project" value="InterPro"/>
</dbReference>
<dbReference type="GO" id="GO:0008270">
    <property type="term" value="F:zinc ion binding"/>
    <property type="evidence" value="ECO:0007669"/>
    <property type="project" value="UniProtKB-UniRule"/>
</dbReference>
<dbReference type="GO" id="GO:0009228">
    <property type="term" value="P:thiamine biosynthetic process"/>
    <property type="evidence" value="ECO:0007669"/>
    <property type="project" value="UniProtKB-KW"/>
</dbReference>
<dbReference type="GO" id="GO:0009229">
    <property type="term" value="P:thiamine diphosphate biosynthetic process"/>
    <property type="evidence" value="ECO:0007669"/>
    <property type="project" value="UniProtKB-UniRule"/>
</dbReference>
<dbReference type="FunFam" id="3.20.20.540:FF:000001">
    <property type="entry name" value="Phosphomethylpyrimidine synthase"/>
    <property type="match status" value="1"/>
</dbReference>
<dbReference type="Gene3D" id="6.10.250.620">
    <property type="match status" value="1"/>
</dbReference>
<dbReference type="Gene3D" id="3.20.20.540">
    <property type="entry name" value="Radical SAM ThiC family, central domain"/>
    <property type="match status" value="1"/>
</dbReference>
<dbReference type="HAMAP" id="MF_00089">
    <property type="entry name" value="ThiC"/>
    <property type="match status" value="1"/>
</dbReference>
<dbReference type="InterPro" id="IPR037509">
    <property type="entry name" value="ThiC"/>
</dbReference>
<dbReference type="InterPro" id="IPR025747">
    <property type="entry name" value="ThiC-associated_dom"/>
</dbReference>
<dbReference type="InterPro" id="IPR038521">
    <property type="entry name" value="ThiC/Bza_core_dom"/>
</dbReference>
<dbReference type="InterPro" id="IPR002817">
    <property type="entry name" value="ThiC/BzaA/B"/>
</dbReference>
<dbReference type="NCBIfam" id="NF006763">
    <property type="entry name" value="PRK09284.1"/>
    <property type="match status" value="1"/>
</dbReference>
<dbReference type="NCBIfam" id="NF009895">
    <property type="entry name" value="PRK13352.1"/>
    <property type="match status" value="1"/>
</dbReference>
<dbReference type="NCBIfam" id="TIGR00190">
    <property type="entry name" value="thiC"/>
    <property type="match status" value="1"/>
</dbReference>
<dbReference type="PANTHER" id="PTHR30557:SF1">
    <property type="entry name" value="PHOSPHOMETHYLPYRIMIDINE SYNTHASE, CHLOROPLASTIC"/>
    <property type="match status" value="1"/>
</dbReference>
<dbReference type="PANTHER" id="PTHR30557">
    <property type="entry name" value="THIAMINE BIOSYNTHESIS PROTEIN THIC"/>
    <property type="match status" value="1"/>
</dbReference>
<dbReference type="Pfam" id="PF13667">
    <property type="entry name" value="ThiC-associated"/>
    <property type="match status" value="1"/>
</dbReference>
<dbReference type="Pfam" id="PF01964">
    <property type="entry name" value="ThiC_Rad_SAM"/>
    <property type="match status" value="1"/>
</dbReference>
<dbReference type="SFLD" id="SFLDF00407">
    <property type="entry name" value="phosphomethylpyrimidine_syntha"/>
    <property type="match status" value="1"/>
</dbReference>
<dbReference type="SFLD" id="SFLDG01114">
    <property type="entry name" value="phosphomethylpyrimidine_syntha"/>
    <property type="match status" value="1"/>
</dbReference>
<dbReference type="SFLD" id="SFLDS00113">
    <property type="entry name" value="Radical_SAM_Phosphomethylpyrim"/>
    <property type="match status" value="1"/>
</dbReference>
<accession>A1TKD9</accession>
<comment type="function">
    <text evidence="1">Catalyzes the synthesis of the hydroxymethylpyrimidine phosphate (HMP-P) moiety of thiamine from aminoimidazole ribotide (AIR) in a radical S-adenosyl-L-methionine (SAM)-dependent reaction.</text>
</comment>
<comment type="catalytic activity">
    <reaction evidence="1">
        <text>5-amino-1-(5-phospho-beta-D-ribosyl)imidazole + S-adenosyl-L-methionine = 4-amino-2-methyl-5-(phosphooxymethyl)pyrimidine + CO + 5'-deoxyadenosine + formate + L-methionine + 3 H(+)</text>
        <dbReference type="Rhea" id="RHEA:24840"/>
        <dbReference type="ChEBI" id="CHEBI:15378"/>
        <dbReference type="ChEBI" id="CHEBI:15740"/>
        <dbReference type="ChEBI" id="CHEBI:17245"/>
        <dbReference type="ChEBI" id="CHEBI:17319"/>
        <dbReference type="ChEBI" id="CHEBI:57844"/>
        <dbReference type="ChEBI" id="CHEBI:58354"/>
        <dbReference type="ChEBI" id="CHEBI:59789"/>
        <dbReference type="ChEBI" id="CHEBI:137981"/>
        <dbReference type="EC" id="4.1.99.17"/>
    </reaction>
</comment>
<comment type="cofactor">
    <cofactor evidence="1">
        <name>[4Fe-4S] cluster</name>
        <dbReference type="ChEBI" id="CHEBI:49883"/>
    </cofactor>
    <text evidence="1">Binds 1 [4Fe-4S] cluster per subunit. The cluster is coordinated with 3 cysteines and an exchangeable S-adenosyl-L-methionine.</text>
</comment>
<comment type="pathway">
    <text evidence="1">Cofactor biosynthesis; thiamine diphosphate biosynthesis.</text>
</comment>
<comment type="subunit">
    <text evidence="1">Homodimer.</text>
</comment>
<comment type="similarity">
    <text evidence="1">Belongs to the ThiC family.</text>
</comment>
<feature type="chain" id="PRO_1000004728" description="Phosphomethylpyrimidine synthase">
    <location>
        <begin position="1"/>
        <end position="617"/>
    </location>
</feature>
<feature type="binding site" evidence="1">
    <location>
        <position position="230"/>
    </location>
    <ligand>
        <name>substrate</name>
    </ligand>
</feature>
<feature type="binding site" evidence="1">
    <location>
        <position position="259"/>
    </location>
    <ligand>
        <name>substrate</name>
    </ligand>
</feature>
<feature type="binding site" evidence="1">
    <location>
        <position position="288"/>
    </location>
    <ligand>
        <name>substrate</name>
    </ligand>
</feature>
<feature type="binding site" evidence="1">
    <location>
        <position position="324"/>
    </location>
    <ligand>
        <name>substrate</name>
    </ligand>
</feature>
<feature type="binding site" evidence="1">
    <location>
        <begin position="344"/>
        <end position="346"/>
    </location>
    <ligand>
        <name>substrate</name>
    </ligand>
</feature>
<feature type="binding site" evidence="1">
    <location>
        <begin position="385"/>
        <end position="388"/>
    </location>
    <ligand>
        <name>substrate</name>
    </ligand>
</feature>
<feature type="binding site" evidence="1">
    <location>
        <position position="424"/>
    </location>
    <ligand>
        <name>substrate</name>
    </ligand>
</feature>
<feature type="binding site" evidence="1">
    <location>
        <position position="428"/>
    </location>
    <ligand>
        <name>Zn(2+)</name>
        <dbReference type="ChEBI" id="CHEBI:29105"/>
    </ligand>
</feature>
<feature type="binding site" evidence="1">
    <location>
        <position position="451"/>
    </location>
    <ligand>
        <name>substrate</name>
    </ligand>
</feature>
<feature type="binding site" evidence="1">
    <location>
        <position position="492"/>
    </location>
    <ligand>
        <name>Zn(2+)</name>
        <dbReference type="ChEBI" id="CHEBI:29105"/>
    </ligand>
</feature>
<feature type="binding site" evidence="1">
    <location>
        <position position="572"/>
    </location>
    <ligand>
        <name>[4Fe-4S] cluster</name>
        <dbReference type="ChEBI" id="CHEBI:49883"/>
        <note>4Fe-4S-S-AdoMet</note>
    </ligand>
</feature>
<feature type="binding site" evidence="1">
    <location>
        <position position="575"/>
    </location>
    <ligand>
        <name>[4Fe-4S] cluster</name>
        <dbReference type="ChEBI" id="CHEBI:49883"/>
        <note>4Fe-4S-S-AdoMet</note>
    </ligand>
</feature>
<feature type="binding site" evidence="1">
    <location>
        <position position="580"/>
    </location>
    <ligand>
        <name>[4Fe-4S] cluster</name>
        <dbReference type="ChEBI" id="CHEBI:49883"/>
        <note>4Fe-4S-S-AdoMet</note>
    </ligand>
</feature>
<proteinExistence type="inferred from homology"/>
<evidence type="ECO:0000255" key="1">
    <source>
        <dbReference type="HAMAP-Rule" id="MF_00089"/>
    </source>
</evidence>
<sequence>MNAPDKFAQLLALTREPFPASTKNYLIGSRPDVRVPVRDIALTNGEQVSVYDTSGPYTDPAAEIDVRRGLPSVRGAWIEGRGDTERYEGRQRVALDDGSKSEDAARLAQLRAEAAALQRAPLRAKSGASHTGNVTQMHYAKKGIVTPEMEYVALRENGRREWMAQYQQDAAREQRLAGNPMGASIPKIITPEFVRDEVARGRAIIPANINHPEVEPMAIGRTFKVKINANIGNSAVTSSIEEEVEKLVWAIRWGADNVMDLSTGKNIHTTRDWIVRNSPVPIGTVPIYQALEKVGGIAEDLTWEIFRDTLVEQAEQGVDYFTIHAGVRLAFIHLTAQRRTGIVSRGGSIMAKWCMAHHRESFLYEHFEDICDIMKQYDVSFSLGDGLRPGCASDANDEAQFAELRTLGELTRTAWKHDVQTMIEGPGHVPMHMIQANMTEQLRTCHEAPFYTLGPLTIDIAPGYDHIASAIGAAMIGWMGTAMLCYVTPKEHLGLPDRDDVKQGIIAYKIAAHAADVAKGHPGARARDDALSQARFDFRWQDQFNLGLDPETAQQYHDETLPKDSAKVAHFCSMCGPKFCSMKITQEVREFAAQGMQEKAREFRGTGGELYVPIQPA</sequence>
<gene>
    <name evidence="1" type="primary">thiC</name>
    <name type="ordered locus">Aave_0829</name>
</gene>
<organism>
    <name type="scientific">Paracidovorax citrulli (strain AAC00-1)</name>
    <name type="common">Acidovorax citrulli</name>
    <dbReference type="NCBI Taxonomy" id="397945"/>
    <lineage>
        <taxon>Bacteria</taxon>
        <taxon>Pseudomonadati</taxon>
        <taxon>Pseudomonadota</taxon>
        <taxon>Betaproteobacteria</taxon>
        <taxon>Burkholderiales</taxon>
        <taxon>Comamonadaceae</taxon>
        <taxon>Paracidovorax</taxon>
    </lineage>
</organism>